<sequence>MAPKAEKKPAEKKPVEEKAEKKPKAEKRVPGAKEGGGEKKGKKKAKKSVETYKIYIFKVLKQVHPDIGISSKAMSIMNSFINDIFEKLAQEAARLARYNKKPTITSREIQTSVRLVLPGELAKHAVSEGTKAVTKFTSS</sequence>
<feature type="initiator methionine" description="Removed" evidence="1">
    <location>
        <position position="1"/>
    </location>
</feature>
<feature type="chain" id="PRO_0000294197" description="Histone H2B.11">
    <location>
        <begin position="2"/>
        <end position="139"/>
    </location>
</feature>
<feature type="region of interest" description="Disordered" evidence="2">
    <location>
        <begin position="1"/>
        <end position="47"/>
    </location>
</feature>
<feature type="compositionally biased region" description="Basic and acidic residues" evidence="2">
    <location>
        <begin position="1"/>
        <end position="39"/>
    </location>
</feature>
<feature type="modified residue" description="N6-acetyllysine" evidence="1">
    <location>
        <position position="7"/>
    </location>
</feature>
<feature type="modified residue" description="N6-acetyllysine" evidence="1">
    <location>
        <position position="27"/>
    </location>
</feature>
<feature type="cross-link" description="Glycyl lysine isopeptide (Lys-Gly) (interchain with G-Cter in ubiquitin)" evidence="1">
    <location>
        <position position="135"/>
    </location>
</feature>
<accession>A2WWU2</accession>
<gene>
    <name type="primary">H2B.11</name>
    <name type="ORF">OsI_004285</name>
</gene>
<proteinExistence type="inferred from homology"/>
<dbReference type="EMBL" id="CM000126">
    <property type="protein sequence ID" value="EAY76438.1"/>
    <property type="molecule type" value="Genomic_DNA"/>
</dbReference>
<dbReference type="SMR" id="A2WWU2"/>
<dbReference type="STRING" id="39946.A2WWU2"/>
<dbReference type="EnsemblPlants" id="BGIOSGA000520-TA">
    <property type="protein sequence ID" value="BGIOSGA000520-PA"/>
    <property type="gene ID" value="BGIOSGA000520"/>
</dbReference>
<dbReference type="EnsemblPlants" id="OsIR64_01g0038310.01">
    <property type="protein sequence ID" value="OsIR64_01g0038310.01"/>
    <property type="gene ID" value="OsIR64_01g0038310"/>
</dbReference>
<dbReference type="EnsemblPlants" id="OsKYG_01g0038610.01">
    <property type="protein sequence ID" value="OsKYG_01g0038610.01"/>
    <property type="gene ID" value="OsKYG_01g0038610"/>
</dbReference>
<dbReference type="EnsemblPlants" id="OsLaMu_01g0038670.01">
    <property type="protein sequence ID" value="OsLaMu_01g0038670.01"/>
    <property type="gene ID" value="OsLaMu_01g0038670"/>
</dbReference>
<dbReference type="EnsemblPlants" id="OsLiXu_01g0038850.01">
    <property type="protein sequence ID" value="OsLiXu_01g0038850.01"/>
    <property type="gene ID" value="OsLiXu_01g0038850"/>
</dbReference>
<dbReference type="EnsemblPlants" id="OsMH63_01G039430_01">
    <property type="protein sequence ID" value="OsMH63_01G039430_01"/>
    <property type="gene ID" value="OsMH63_01G039430"/>
</dbReference>
<dbReference type="EnsemblPlants" id="OsPr106_01g0038630.01">
    <property type="protein sequence ID" value="OsPr106_01g0038630.01"/>
    <property type="gene ID" value="OsPr106_01g0038630"/>
</dbReference>
<dbReference type="EnsemblPlants" id="OsZS97_01G038840_01">
    <property type="protein sequence ID" value="OsZS97_01G038840_01"/>
    <property type="gene ID" value="OsZS97_01G038840"/>
</dbReference>
<dbReference type="Gramene" id="BGIOSGA000520-TA">
    <property type="protein sequence ID" value="BGIOSGA000520-PA"/>
    <property type="gene ID" value="BGIOSGA000520"/>
</dbReference>
<dbReference type="Gramene" id="OsIR64_01g0038310.01">
    <property type="protein sequence ID" value="OsIR64_01g0038310.01"/>
    <property type="gene ID" value="OsIR64_01g0038310"/>
</dbReference>
<dbReference type="Gramene" id="OsKYG_01g0038610.01">
    <property type="protein sequence ID" value="OsKYG_01g0038610.01"/>
    <property type="gene ID" value="OsKYG_01g0038610"/>
</dbReference>
<dbReference type="Gramene" id="OsLaMu_01g0038670.01">
    <property type="protein sequence ID" value="OsLaMu_01g0038670.01"/>
    <property type="gene ID" value="OsLaMu_01g0038670"/>
</dbReference>
<dbReference type="Gramene" id="OsLiXu_01g0038850.01">
    <property type="protein sequence ID" value="OsLiXu_01g0038850.01"/>
    <property type="gene ID" value="OsLiXu_01g0038850"/>
</dbReference>
<dbReference type="Gramene" id="OsMH63_01G039430_01">
    <property type="protein sequence ID" value="OsMH63_01G039430_01"/>
    <property type="gene ID" value="OsMH63_01G039430"/>
</dbReference>
<dbReference type="Gramene" id="OsPr106_01g0038630.01">
    <property type="protein sequence ID" value="OsPr106_01g0038630.01"/>
    <property type="gene ID" value="OsPr106_01g0038630"/>
</dbReference>
<dbReference type="Gramene" id="OsZS97_01G038840_01">
    <property type="protein sequence ID" value="OsZS97_01G038840_01"/>
    <property type="gene ID" value="OsZS97_01G038840"/>
</dbReference>
<dbReference type="HOGENOM" id="CLU_075666_1_0_1"/>
<dbReference type="OMA" id="RITIEAC"/>
<dbReference type="Proteomes" id="UP000007015">
    <property type="component" value="Chromosome 1"/>
</dbReference>
<dbReference type="GO" id="GO:0000786">
    <property type="term" value="C:nucleosome"/>
    <property type="evidence" value="ECO:0007669"/>
    <property type="project" value="UniProtKB-KW"/>
</dbReference>
<dbReference type="GO" id="GO:0005634">
    <property type="term" value="C:nucleus"/>
    <property type="evidence" value="ECO:0007669"/>
    <property type="project" value="UniProtKB-SubCell"/>
</dbReference>
<dbReference type="GO" id="GO:0003677">
    <property type="term" value="F:DNA binding"/>
    <property type="evidence" value="ECO:0007669"/>
    <property type="project" value="UniProtKB-KW"/>
</dbReference>
<dbReference type="GO" id="GO:0046982">
    <property type="term" value="F:protein heterodimerization activity"/>
    <property type="evidence" value="ECO:0007669"/>
    <property type="project" value="InterPro"/>
</dbReference>
<dbReference type="GO" id="GO:0030527">
    <property type="term" value="F:structural constituent of chromatin"/>
    <property type="evidence" value="ECO:0007669"/>
    <property type="project" value="InterPro"/>
</dbReference>
<dbReference type="CDD" id="cd22910">
    <property type="entry name" value="HFD_H2B"/>
    <property type="match status" value="1"/>
</dbReference>
<dbReference type="FunFam" id="1.10.20.10:FF:000014">
    <property type="entry name" value="Histone H2B"/>
    <property type="match status" value="1"/>
</dbReference>
<dbReference type="Gene3D" id="1.10.20.10">
    <property type="entry name" value="Histone, subunit A"/>
    <property type="match status" value="1"/>
</dbReference>
<dbReference type="InterPro" id="IPR009072">
    <property type="entry name" value="Histone-fold"/>
</dbReference>
<dbReference type="InterPro" id="IPR007125">
    <property type="entry name" value="Histone_H2A/H2B/H3"/>
</dbReference>
<dbReference type="InterPro" id="IPR000558">
    <property type="entry name" value="Histone_H2B"/>
</dbReference>
<dbReference type="InterPro" id="IPR055333">
    <property type="entry name" value="HISTONE_H2B_site"/>
</dbReference>
<dbReference type="PANTHER" id="PTHR23428">
    <property type="entry name" value="HISTONE H2B"/>
    <property type="match status" value="1"/>
</dbReference>
<dbReference type="Pfam" id="PF00125">
    <property type="entry name" value="Histone"/>
    <property type="match status" value="1"/>
</dbReference>
<dbReference type="PRINTS" id="PR00621">
    <property type="entry name" value="HISTONEH2B"/>
</dbReference>
<dbReference type="SMART" id="SM00427">
    <property type="entry name" value="H2B"/>
    <property type="match status" value="1"/>
</dbReference>
<dbReference type="SUPFAM" id="SSF47113">
    <property type="entry name" value="Histone-fold"/>
    <property type="match status" value="1"/>
</dbReference>
<dbReference type="PROSITE" id="PS00357">
    <property type="entry name" value="HISTONE_H2B"/>
    <property type="match status" value="1"/>
</dbReference>
<comment type="function">
    <text>Core component of nucleosome. Nucleosomes wrap and compact DNA into chromatin, limiting DNA accessibility to the cellular machineries which require DNA as a template. Histones thereby play a central role in transcription regulation, DNA repair, DNA replication and chromosomal stability. DNA accessibility is regulated via a complex set of post-translational modifications of histones, also called histone code, and nucleosome remodeling.</text>
</comment>
<comment type="subunit">
    <text>The nucleosome is a histone octamer containing two molecules each of H2A, H2B, H3 and H4 assembled in one H3-H4 heterotetramer and two H2A-H2B heterodimers. The octamer wraps approximately 147 bp of DNA.</text>
</comment>
<comment type="subcellular location">
    <subcellularLocation>
        <location evidence="1">Nucleus</location>
    </subcellularLocation>
    <subcellularLocation>
        <location evidence="1">Chromosome</location>
    </subcellularLocation>
</comment>
<comment type="PTM">
    <text evidence="1">Can be acetylated to form H2BK6ac and H2BK33ac.</text>
</comment>
<comment type="PTM">
    <text evidence="1">Monoubiquitinated by BRE1 to form H2BK143ub1 and deubiquitinated by UBP26. Required for heterochromatic histone H3 di- and trimethylation at H3K4me. May give a specific tag for epigenetic transcriptional activation (By similarity).</text>
</comment>
<comment type="similarity">
    <text evidence="3">Belongs to the histone H2B family.</text>
</comment>
<comment type="caution">
    <text evidence="3">To ensure consistency between histone entries, we follow the 'Brno' nomenclature for histone modifications, with positions referring to those used in the literature for the 'closest' model organism. Due to slight variations in histone sequences between organisms and to the presence of initiator methionine in UniProtKB/Swiss-Prot sequences, the actual positions of modified amino acids in the sequence generally differ. In this entry the following conventions are used: H2BK6ac = acetylated Lys-7; H2BK33ac = acetylated Lys-27; H2BK143ub1 = monoubiquitinated Lys-135.</text>
</comment>
<reference key="1">
    <citation type="journal article" date="2005" name="PLoS Biol.">
        <title>The genomes of Oryza sativa: a history of duplications.</title>
        <authorList>
            <person name="Yu J."/>
            <person name="Wang J."/>
            <person name="Lin W."/>
            <person name="Li S."/>
            <person name="Li H."/>
            <person name="Zhou J."/>
            <person name="Ni P."/>
            <person name="Dong W."/>
            <person name="Hu S."/>
            <person name="Zeng C."/>
            <person name="Zhang J."/>
            <person name="Zhang Y."/>
            <person name="Li R."/>
            <person name="Xu Z."/>
            <person name="Li S."/>
            <person name="Li X."/>
            <person name="Zheng H."/>
            <person name="Cong L."/>
            <person name="Lin L."/>
            <person name="Yin J."/>
            <person name="Geng J."/>
            <person name="Li G."/>
            <person name="Shi J."/>
            <person name="Liu J."/>
            <person name="Lv H."/>
            <person name="Li J."/>
            <person name="Wang J."/>
            <person name="Deng Y."/>
            <person name="Ran L."/>
            <person name="Shi X."/>
            <person name="Wang X."/>
            <person name="Wu Q."/>
            <person name="Li C."/>
            <person name="Ren X."/>
            <person name="Wang J."/>
            <person name="Wang X."/>
            <person name="Li D."/>
            <person name="Liu D."/>
            <person name="Zhang X."/>
            <person name="Ji Z."/>
            <person name="Zhao W."/>
            <person name="Sun Y."/>
            <person name="Zhang Z."/>
            <person name="Bao J."/>
            <person name="Han Y."/>
            <person name="Dong L."/>
            <person name="Ji J."/>
            <person name="Chen P."/>
            <person name="Wu S."/>
            <person name="Liu J."/>
            <person name="Xiao Y."/>
            <person name="Bu D."/>
            <person name="Tan J."/>
            <person name="Yang L."/>
            <person name="Ye C."/>
            <person name="Zhang J."/>
            <person name="Xu J."/>
            <person name="Zhou Y."/>
            <person name="Yu Y."/>
            <person name="Zhang B."/>
            <person name="Zhuang S."/>
            <person name="Wei H."/>
            <person name="Liu B."/>
            <person name="Lei M."/>
            <person name="Yu H."/>
            <person name="Li Y."/>
            <person name="Xu H."/>
            <person name="Wei S."/>
            <person name="He X."/>
            <person name="Fang L."/>
            <person name="Zhang Z."/>
            <person name="Zhang Y."/>
            <person name="Huang X."/>
            <person name="Su Z."/>
            <person name="Tong W."/>
            <person name="Li J."/>
            <person name="Tong Z."/>
            <person name="Li S."/>
            <person name="Ye J."/>
            <person name="Wang L."/>
            <person name="Fang L."/>
            <person name="Lei T."/>
            <person name="Chen C.-S."/>
            <person name="Chen H.-C."/>
            <person name="Xu Z."/>
            <person name="Li H."/>
            <person name="Huang H."/>
            <person name="Zhang F."/>
            <person name="Xu H."/>
            <person name="Li N."/>
            <person name="Zhao C."/>
            <person name="Li S."/>
            <person name="Dong L."/>
            <person name="Huang Y."/>
            <person name="Li L."/>
            <person name="Xi Y."/>
            <person name="Qi Q."/>
            <person name="Li W."/>
            <person name="Zhang B."/>
            <person name="Hu W."/>
            <person name="Zhang Y."/>
            <person name="Tian X."/>
            <person name="Jiao Y."/>
            <person name="Liang X."/>
            <person name="Jin J."/>
            <person name="Gao L."/>
            <person name="Zheng W."/>
            <person name="Hao B."/>
            <person name="Liu S.-M."/>
            <person name="Wang W."/>
            <person name="Yuan L."/>
            <person name="Cao M."/>
            <person name="McDermott J."/>
            <person name="Samudrala R."/>
            <person name="Wang J."/>
            <person name="Wong G.K.-S."/>
            <person name="Yang H."/>
        </authorList>
    </citation>
    <scope>NUCLEOTIDE SEQUENCE [LARGE SCALE GENOMIC DNA]</scope>
    <source>
        <strain>cv. 93-11</strain>
    </source>
</reference>
<organism>
    <name type="scientific">Oryza sativa subsp. indica</name>
    <name type="common">Rice</name>
    <dbReference type="NCBI Taxonomy" id="39946"/>
    <lineage>
        <taxon>Eukaryota</taxon>
        <taxon>Viridiplantae</taxon>
        <taxon>Streptophyta</taxon>
        <taxon>Embryophyta</taxon>
        <taxon>Tracheophyta</taxon>
        <taxon>Spermatophyta</taxon>
        <taxon>Magnoliopsida</taxon>
        <taxon>Liliopsida</taxon>
        <taxon>Poales</taxon>
        <taxon>Poaceae</taxon>
        <taxon>BOP clade</taxon>
        <taxon>Oryzoideae</taxon>
        <taxon>Oryzeae</taxon>
        <taxon>Oryzinae</taxon>
        <taxon>Oryza</taxon>
        <taxon>Oryza sativa</taxon>
    </lineage>
</organism>
<evidence type="ECO:0000250" key="1"/>
<evidence type="ECO:0000256" key="2">
    <source>
        <dbReference type="SAM" id="MobiDB-lite"/>
    </source>
</evidence>
<evidence type="ECO:0000305" key="3"/>
<protein>
    <recommendedName>
        <fullName>Histone H2B.11</fullName>
    </recommendedName>
</protein>
<keyword id="KW-0007">Acetylation</keyword>
<keyword id="KW-0158">Chromosome</keyword>
<keyword id="KW-0238">DNA-binding</keyword>
<keyword id="KW-1017">Isopeptide bond</keyword>
<keyword id="KW-0544">Nucleosome core</keyword>
<keyword id="KW-0539">Nucleus</keyword>
<keyword id="KW-1185">Reference proteome</keyword>
<keyword id="KW-0832">Ubl conjugation</keyword>
<name>H2B11_ORYSI</name>